<evidence type="ECO:0000255" key="1">
    <source>
        <dbReference type="HAMAP-Rule" id="MF_00686"/>
    </source>
</evidence>
<proteinExistence type="inferred from homology"/>
<comment type="function">
    <text evidence="1">Could be a mediator in iron transactions between iron acquisition and iron-requiring processes, such as synthesis and/or repair of Fe-S clusters in biosynthetic enzymes.</text>
</comment>
<comment type="similarity">
    <text evidence="1">Belongs to the Fe(2+)-trafficking protein family.</text>
</comment>
<name>FETP_SHESR</name>
<reference key="1">
    <citation type="submission" date="2006-08" db="EMBL/GenBank/DDBJ databases">
        <title>Complete sequence of chromosome 1 of Shewanella sp. MR-7.</title>
        <authorList>
            <person name="Copeland A."/>
            <person name="Lucas S."/>
            <person name="Lapidus A."/>
            <person name="Barry K."/>
            <person name="Detter J.C."/>
            <person name="Glavina del Rio T."/>
            <person name="Hammon N."/>
            <person name="Israni S."/>
            <person name="Dalin E."/>
            <person name="Tice H."/>
            <person name="Pitluck S."/>
            <person name="Kiss H."/>
            <person name="Brettin T."/>
            <person name="Bruce D."/>
            <person name="Han C."/>
            <person name="Tapia R."/>
            <person name="Gilna P."/>
            <person name="Schmutz J."/>
            <person name="Larimer F."/>
            <person name="Land M."/>
            <person name="Hauser L."/>
            <person name="Kyrpides N."/>
            <person name="Mikhailova N."/>
            <person name="Nealson K."/>
            <person name="Konstantinidis K."/>
            <person name="Klappenbach J."/>
            <person name="Tiedje J."/>
            <person name="Richardson P."/>
        </authorList>
    </citation>
    <scope>NUCLEOTIDE SEQUENCE [LARGE SCALE GENOMIC DNA]</scope>
    <source>
        <strain>MR-7</strain>
    </source>
</reference>
<accession>Q0HXA6</accession>
<dbReference type="EMBL" id="CP000444">
    <property type="protein sequence ID" value="ABI42249.1"/>
    <property type="molecule type" value="Genomic_DNA"/>
</dbReference>
<dbReference type="SMR" id="Q0HXA6"/>
<dbReference type="KEGG" id="shm:Shewmr7_1250"/>
<dbReference type="HOGENOM" id="CLU_170994_0_0_6"/>
<dbReference type="GO" id="GO:0005829">
    <property type="term" value="C:cytosol"/>
    <property type="evidence" value="ECO:0007669"/>
    <property type="project" value="TreeGrafter"/>
</dbReference>
<dbReference type="GO" id="GO:0005506">
    <property type="term" value="F:iron ion binding"/>
    <property type="evidence" value="ECO:0007669"/>
    <property type="project" value="UniProtKB-UniRule"/>
</dbReference>
<dbReference type="GO" id="GO:0034599">
    <property type="term" value="P:cellular response to oxidative stress"/>
    <property type="evidence" value="ECO:0007669"/>
    <property type="project" value="TreeGrafter"/>
</dbReference>
<dbReference type="FunFam" id="1.10.3880.10:FF:000001">
    <property type="entry name" value="Probable Fe(2+)-trafficking protein"/>
    <property type="match status" value="1"/>
</dbReference>
<dbReference type="Gene3D" id="1.10.3880.10">
    <property type="entry name" value="Fe(II) trafficking protein YggX"/>
    <property type="match status" value="1"/>
</dbReference>
<dbReference type="HAMAP" id="MF_00686">
    <property type="entry name" value="Fe_traffic_YggX"/>
    <property type="match status" value="1"/>
</dbReference>
<dbReference type="InterPro" id="IPR007457">
    <property type="entry name" value="Fe_traffick_prot_YggX"/>
</dbReference>
<dbReference type="InterPro" id="IPR036766">
    <property type="entry name" value="Fe_traffick_prot_YggX_sf"/>
</dbReference>
<dbReference type="NCBIfam" id="NF003817">
    <property type="entry name" value="PRK05408.1"/>
    <property type="match status" value="1"/>
</dbReference>
<dbReference type="PANTHER" id="PTHR36965">
    <property type="entry name" value="FE(2+)-TRAFFICKING PROTEIN-RELATED"/>
    <property type="match status" value="1"/>
</dbReference>
<dbReference type="PANTHER" id="PTHR36965:SF1">
    <property type="entry name" value="FE(2+)-TRAFFICKING PROTEIN-RELATED"/>
    <property type="match status" value="1"/>
</dbReference>
<dbReference type="Pfam" id="PF04362">
    <property type="entry name" value="Iron_traffic"/>
    <property type="match status" value="1"/>
</dbReference>
<dbReference type="PIRSF" id="PIRSF029827">
    <property type="entry name" value="Fe_traffic_YggX"/>
    <property type="match status" value="1"/>
</dbReference>
<dbReference type="SUPFAM" id="SSF111148">
    <property type="entry name" value="YggX-like"/>
    <property type="match status" value="1"/>
</dbReference>
<feature type="chain" id="PRO_1000045069" description="Probable Fe(2+)-trafficking protein">
    <location>
        <begin position="1"/>
        <end position="92"/>
    </location>
</feature>
<gene>
    <name type="ordered locus">Shewmr7_1250</name>
</gene>
<protein>
    <recommendedName>
        <fullName evidence="1">Probable Fe(2+)-trafficking protein</fullName>
    </recommendedName>
</protein>
<sequence length="92" mass="10768">MARTVNCVYLNKEADGLDFQLYPGDLGKRIFDNVSKEAWGLWQKKQTMLINEKKLNMMNVDDRKFLEEQMTSFLFEGKDVEIEGFVPEKGQE</sequence>
<keyword id="KW-0408">Iron</keyword>
<organism>
    <name type="scientific">Shewanella sp. (strain MR-7)</name>
    <dbReference type="NCBI Taxonomy" id="60481"/>
    <lineage>
        <taxon>Bacteria</taxon>
        <taxon>Pseudomonadati</taxon>
        <taxon>Pseudomonadota</taxon>
        <taxon>Gammaproteobacteria</taxon>
        <taxon>Alteromonadales</taxon>
        <taxon>Shewanellaceae</taxon>
        <taxon>Shewanella</taxon>
    </lineage>
</organism>